<dbReference type="EC" id="2.7.7.6" evidence="1"/>
<dbReference type="EMBL" id="EF044213">
    <property type="protein sequence ID" value="ABJ89671.1"/>
    <property type="molecule type" value="Genomic_DNA"/>
</dbReference>
<dbReference type="RefSeq" id="YP_817474.1">
    <property type="nucleotide sequence ID" value="NC_008535.1"/>
</dbReference>
<dbReference type="SMR" id="A0A327"/>
<dbReference type="GeneID" id="4421747"/>
<dbReference type="OrthoDB" id="1927092at2759"/>
<dbReference type="Proteomes" id="UP000515148">
    <property type="component" value="Chloroplast Pltd"/>
</dbReference>
<dbReference type="GO" id="GO:0009507">
    <property type="term" value="C:chloroplast"/>
    <property type="evidence" value="ECO:0007669"/>
    <property type="project" value="UniProtKB-SubCell"/>
</dbReference>
<dbReference type="GO" id="GO:0000428">
    <property type="term" value="C:DNA-directed RNA polymerase complex"/>
    <property type="evidence" value="ECO:0007669"/>
    <property type="project" value="UniProtKB-KW"/>
</dbReference>
<dbReference type="GO" id="GO:0005739">
    <property type="term" value="C:mitochondrion"/>
    <property type="evidence" value="ECO:0007669"/>
    <property type="project" value="GOC"/>
</dbReference>
<dbReference type="GO" id="GO:0003677">
    <property type="term" value="F:DNA binding"/>
    <property type="evidence" value="ECO:0007669"/>
    <property type="project" value="UniProtKB-UniRule"/>
</dbReference>
<dbReference type="GO" id="GO:0003899">
    <property type="term" value="F:DNA-directed RNA polymerase activity"/>
    <property type="evidence" value="ECO:0007669"/>
    <property type="project" value="UniProtKB-UniRule"/>
</dbReference>
<dbReference type="GO" id="GO:0032549">
    <property type="term" value="F:ribonucleoside binding"/>
    <property type="evidence" value="ECO:0007669"/>
    <property type="project" value="InterPro"/>
</dbReference>
<dbReference type="GO" id="GO:0006351">
    <property type="term" value="P:DNA-templated transcription"/>
    <property type="evidence" value="ECO:0007669"/>
    <property type="project" value="UniProtKB-UniRule"/>
</dbReference>
<dbReference type="CDD" id="cd00653">
    <property type="entry name" value="RNA_pol_B_RPB2"/>
    <property type="match status" value="1"/>
</dbReference>
<dbReference type="FunFam" id="3.90.1110.10:FF:000009">
    <property type="entry name" value="DNA-directed RNA polymerase subunit beta"/>
    <property type="match status" value="1"/>
</dbReference>
<dbReference type="Gene3D" id="2.40.50.100">
    <property type="match status" value="1"/>
</dbReference>
<dbReference type="Gene3D" id="2.40.50.150">
    <property type="match status" value="1"/>
</dbReference>
<dbReference type="Gene3D" id="3.90.1100.10">
    <property type="match status" value="1"/>
</dbReference>
<dbReference type="Gene3D" id="2.30.150.10">
    <property type="entry name" value="DNA-directed RNA polymerase, beta subunit, external 1 domain"/>
    <property type="match status" value="1"/>
</dbReference>
<dbReference type="Gene3D" id="2.40.270.10">
    <property type="entry name" value="DNA-directed RNA polymerase, subunit 2, domain 6"/>
    <property type="match status" value="1"/>
</dbReference>
<dbReference type="Gene3D" id="3.90.1800.10">
    <property type="entry name" value="RNA polymerase alpha subunit dimerisation domain"/>
    <property type="match status" value="1"/>
</dbReference>
<dbReference type="Gene3D" id="3.90.1110.10">
    <property type="entry name" value="RNA polymerase Rpb2, domain 2"/>
    <property type="match status" value="1"/>
</dbReference>
<dbReference type="HAMAP" id="MF_01321">
    <property type="entry name" value="RNApol_bact_RpoB"/>
    <property type="match status" value="1"/>
</dbReference>
<dbReference type="InterPro" id="IPR042107">
    <property type="entry name" value="DNA-dir_RNA_pol_bsu_ext_1_sf"/>
</dbReference>
<dbReference type="InterPro" id="IPR015712">
    <property type="entry name" value="DNA-dir_RNA_pol_su2"/>
</dbReference>
<dbReference type="InterPro" id="IPR007120">
    <property type="entry name" value="DNA-dir_RNAP_su2_dom"/>
</dbReference>
<dbReference type="InterPro" id="IPR037033">
    <property type="entry name" value="DNA-dir_RNAP_su2_hyb_sf"/>
</dbReference>
<dbReference type="InterPro" id="IPR010243">
    <property type="entry name" value="RNA_pol_bsu_bac"/>
</dbReference>
<dbReference type="InterPro" id="IPR007121">
    <property type="entry name" value="RNA_pol_bsu_CS"/>
</dbReference>
<dbReference type="InterPro" id="IPR007644">
    <property type="entry name" value="RNA_pol_bsu_protrusion"/>
</dbReference>
<dbReference type="InterPro" id="IPR007642">
    <property type="entry name" value="RNA_pol_Rpb2_2"/>
</dbReference>
<dbReference type="InterPro" id="IPR037034">
    <property type="entry name" value="RNA_pol_Rpb2_2_sf"/>
</dbReference>
<dbReference type="InterPro" id="IPR007645">
    <property type="entry name" value="RNA_pol_Rpb2_3"/>
</dbReference>
<dbReference type="InterPro" id="IPR007641">
    <property type="entry name" value="RNA_pol_Rpb2_7"/>
</dbReference>
<dbReference type="InterPro" id="IPR014724">
    <property type="entry name" value="RNA_pol_RPB2_OB-fold"/>
</dbReference>
<dbReference type="NCBIfam" id="NF001616">
    <property type="entry name" value="PRK00405.1"/>
    <property type="match status" value="1"/>
</dbReference>
<dbReference type="PANTHER" id="PTHR20856">
    <property type="entry name" value="DNA-DIRECTED RNA POLYMERASE I SUBUNIT 2"/>
    <property type="match status" value="1"/>
</dbReference>
<dbReference type="Pfam" id="PF04563">
    <property type="entry name" value="RNA_pol_Rpb2_1"/>
    <property type="match status" value="1"/>
</dbReference>
<dbReference type="Pfam" id="PF04561">
    <property type="entry name" value="RNA_pol_Rpb2_2"/>
    <property type="match status" value="1"/>
</dbReference>
<dbReference type="Pfam" id="PF04565">
    <property type="entry name" value="RNA_pol_Rpb2_3"/>
    <property type="match status" value="1"/>
</dbReference>
<dbReference type="Pfam" id="PF00562">
    <property type="entry name" value="RNA_pol_Rpb2_6"/>
    <property type="match status" value="1"/>
</dbReference>
<dbReference type="Pfam" id="PF04560">
    <property type="entry name" value="RNA_pol_Rpb2_7"/>
    <property type="match status" value="1"/>
</dbReference>
<dbReference type="SUPFAM" id="SSF64484">
    <property type="entry name" value="beta and beta-prime subunits of DNA dependent RNA-polymerase"/>
    <property type="match status" value="1"/>
</dbReference>
<dbReference type="PROSITE" id="PS01166">
    <property type="entry name" value="RNA_POL_BETA"/>
    <property type="match status" value="1"/>
</dbReference>
<sequence>MLGDGNEGMATIPGFNQIQFEGFCRFIDQGLAEELYKFPKIEDTDQEIEFQLFVETYQLVEPLIKERDAVYELLTYSSELYVSAGLIWKTGRDMQEQTIFIGNIPLMNSLGTFIVNGVYRILINQILQSPGIYYRSELDHNGISVYTGTIISDWGGRSELEIDRKARIWARVSRKQKISILVLSSAMGSNLREILENVCYPEIFLSFLNDKERKKIGSKENAILEFYQQFACVGGDPVFSESLCKELQKKFFQQRCELGRIGRRNMNRRLNLDIPQNNPFLLPRDILAAADHLIGLKFGMGTLDDMNHLKNKRIRSVADLLQDQFGLALVRLENAVRGTICGAIRHKLIPTPQNLVTSTPLTTTYESFFGLHPLSQVLDGTNPLTQIVHGRKLSYLGPGGLTGRTANFRIRDIHPSHYGRICPIDTSEGINVGLIGSLSIHARIGHWGFLESPFYEISERRVLFLLPGRDEYYKVAAGNSLALNQDIQEKQVVPARYRQEFLTIAWEQVHLRSIFPFQYFSIGASLIPFIEHNDANRALMSSNMQRQAVPLSRSEKCIVGTGLEQQAALDSGALSIAEREGKVLYTDTDKILLSGNGGTLSIPLVMYQRSNKNTCMHQKPRVQRGKCIKKGQILADAAATVGGELSLGKNVLVAYMPWEGYNFEDAVLISERLVYEDIYTSFHIRKYEIQTHVTSQGPERVTNEIPHLEAHLLRNLDKSGIVMLGSWVETGDILVGKLTPQMVKESSYAPEDRLLRAILGIQVSTSKETCLKLPIGGRGRVIDVRWIQKKGGSSYNPEMIRVYISQKREIKVGDKVAGRHGNKGIISKILTRQDMPYLQDGRPVDMVFNPLGVPSRMNVGQIFECSLGLAGSLLDRHYRIAPFDERYEQEASRKLVFSELYQASKQTANPWVFEAEYPGKSRIFDGRTGNPFEQPVLIGKPYILKLIHQVDDKIHGRSSGHYALVTQQPLRGRAKQGGQRVGEMEVWALEGFGVAHILQEMLTYKSDHIRARQEVLGTTIVGGTIPNPEDAPESFRLLVRELRSLALELKHFLISEKNFRIHRKEA</sequence>
<comment type="function">
    <text evidence="1">DNA-dependent RNA polymerase catalyzes the transcription of DNA into RNA using the four ribonucleoside triphosphates as substrates.</text>
</comment>
<comment type="catalytic activity">
    <reaction evidence="1">
        <text>RNA(n) + a ribonucleoside 5'-triphosphate = RNA(n+1) + diphosphate</text>
        <dbReference type="Rhea" id="RHEA:21248"/>
        <dbReference type="Rhea" id="RHEA-COMP:14527"/>
        <dbReference type="Rhea" id="RHEA-COMP:17342"/>
        <dbReference type="ChEBI" id="CHEBI:33019"/>
        <dbReference type="ChEBI" id="CHEBI:61557"/>
        <dbReference type="ChEBI" id="CHEBI:140395"/>
        <dbReference type="EC" id="2.7.7.6"/>
    </reaction>
</comment>
<comment type="subunit">
    <text evidence="1">In plastids the minimal PEP RNA polymerase catalytic core is composed of four subunits: alpha, beta, beta', and beta''. When a (nuclear-encoded) sigma factor is associated with the core the holoenzyme is formed, which can initiate transcription.</text>
</comment>
<comment type="subcellular location">
    <subcellularLocation>
        <location>Plastid</location>
        <location>Chloroplast</location>
    </subcellularLocation>
</comment>
<comment type="similarity">
    <text evidence="1">Belongs to the RNA polymerase beta chain family.</text>
</comment>
<gene>
    <name evidence="1" type="primary">rpoB</name>
</gene>
<protein>
    <recommendedName>
        <fullName evidence="1">DNA-directed RNA polymerase subunit beta</fullName>
        <ecNumber evidence="1">2.7.7.6</ecNumber>
    </recommendedName>
    <alternativeName>
        <fullName evidence="1">PEP</fullName>
    </alternativeName>
    <alternativeName>
        <fullName evidence="1">Plastid-encoded RNA polymerase subunit beta</fullName>
        <shortName evidence="1">RNA polymerase subunit beta</shortName>
    </alternativeName>
</protein>
<feature type="chain" id="PRO_0000276585" description="DNA-directed RNA polymerase subunit beta">
    <location>
        <begin position="1"/>
        <end position="1066"/>
    </location>
</feature>
<proteinExistence type="inferred from homology"/>
<reference key="1">
    <citation type="journal article" date="2007" name="Plant Biotechnol. J.">
        <title>The complete nucleotide sequence of the coffee (Coffea arabica L.) chloroplast genome: organization and implications for biotechnology and phylogenetic relationships amongst angiosperms.</title>
        <authorList>
            <person name="Samson N."/>
            <person name="Bausher M.G."/>
            <person name="Lee S.-B."/>
            <person name="Jansen R.K."/>
            <person name="Daniell H."/>
        </authorList>
    </citation>
    <scope>NUCLEOTIDE SEQUENCE [LARGE SCALE GENOMIC DNA]</scope>
</reference>
<name>RPOB_COFAR</name>
<keyword id="KW-0150">Chloroplast</keyword>
<keyword id="KW-0240">DNA-directed RNA polymerase</keyword>
<keyword id="KW-0548">Nucleotidyltransferase</keyword>
<keyword id="KW-0934">Plastid</keyword>
<keyword id="KW-1185">Reference proteome</keyword>
<keyword id="KW-0804">Transcription</keyword>
<keyword id="KW-0808">Transferase</keyword>
<accession>A0A327</accession>
<organism>
    <name type="scientific">Coffea arabica</name>
    <name type="common">Arabian coffee</name>
    <dbReference type="NCBI Taxonomy" id="13443"/>
    <lineage>
        <taxon>Eukaryota</taxon>
        <taxon>Viridiplantae</taxon>
        <taxon>Streptophyta</taxon>
        <taxon>Embryophyta</taxon>
        <taxon>Tracheophyta</taxon>
        <taxon>Spermatophyta</taxon>
        <taxon>Magnoliopsida</taxon>
        <taxon>eudicotyledons</taxon>
        <taxon>Gunneridae</taxon>
        <taxon>Pentapetalae</taxon>
        <taxon>asterids</taxon>
        <taxon>lamiids</taxon>
        <taxon>Gentianales</taxon>
        <taxon>Rubiaceae</taxon>
        <taxon>Ixoroideae</taxon>
        <taxon>Gardenieae complex</taxon>
        <taxon>Bertiereae - Coffeeae clade</taxon>
        <taxon>Coffeeae</taxon>
        <taxon>Coffea</taxon>
    </lineage>
</organism>
<evidence type="ECO:0000255" key="1">
    <source>
        <dbReference type="HAMAP-Rule" id="MF_01321"/>
    </source>
</evidence>
<geneLocation type="chloroplast"/>